<keyword id="KW-0002">3D-structure</keyword>
<keyword id="KW-0008">Acetylcholine receptor inhibiting toxin</keyword>
<keyword id="KW-0903">Direct protein sequencing</keyword>
<keyword id="KW-1015">Disulfide bond</keyword>
<keyword id="KW-0872">Ion channel impairing toxin</keyword>
<keyword id="KW-0528">Neurotoxin</keyword>
<keyword id="KW-0629">Postsynaptic neurotoxin</keyword>
<keyword id="KW-0964">Secreted</keyword>
<keyword id="KW-0800">Toxin</keyword>
<sequence length="18" mass="1935">EGCCSNPACRTNHPEVCD</sequence>
<evidence type="ECO:0000269" key="1">
    <source>
    </source>
</evidence>
<evidence type="ECO:0000303" key="2">
    <source>
    </source>
</evidence>
<evidence type="ECO:0000305" key="3"/>
<evidence type="ECO:0000305" key="4">
    <source>
    </source>
</evidence>
<evidence type="ECO:0007829" key="5">
    <source>
        <dbReference type="PDB" id="2MD6"/>
    </source>
</evidence>
<organism>
    <name type="scientific">Conasprella longurionis</name>
    <name type="common">Cone snail</name>
    <name type="synonym">Conus longurionis</name>
    <dbReference type="NCBI Taxonomy" id="1077918"/>
    <lineage>
        <taxon>Eukaryota</taxon>
        <taxon>Metazoa</taxon>
        <taxon>Spiralia</taxon>
        <taxon>Lophotrochozoa</taxon>
        <taxon>Mollusca</taxon>
        <taxon>Gastropoda</taxon>
        <taxon>Caenogastropoda</taxon>
        <taxon>Neogastropoda</taxon>
        <taxon>Conoidea</taxon>
        <taxon>Conidae</taxon>
        <taxon>Conasprella</taxon>
        <taxon>Fusiconus</taxon>
    </lineage>
</organism>
<accession>X1WB75</accession>
<reference key="1">
    <citation type="journal article" date="2014" name="J. Biol. Chem.">
        <title>Structure-function elucidation of a new alpha-conotoxin, Lo1a, from Conus longurionis.</title>
        <authorList>
            <person name="Lebbe E.K."/>
            <person name="Peigneur S."/>
            <person name="Maiti M."/>
            <person name="Devi P."/>
            <person name="Ravichandran S."/>
            <person name="Lescrinier E."/>
            <person name="Ulens C."/>
            <person name="Waelkens E."/>
            <person name="D'Souza L."/>
            <person name="Herdewijn P."/>
            <person name="Tytgat J."/>
        </authorList>
    </citation>
    <scope>PROTEIN SEQUENCE</scope>
    <scope>SYNTHESIS</scope>
    <scope>MASS SPECTROMETRY</scope>
    <scope>MUTAGENESIS OF ASP-18</scope>
    <scope>STRUCTURE BY NMR</scope>
    <scope>FUNCTION</scope>
    <scope>DISULFIDE BOND</scope>
    <scope>SUBCELLULAR LOCATION</scope>
    <source>
        <tissue>Venom</tissue>
    </source>
</reference>
<name>CA1A_CONLG</name>
<protein>
    <recommendedName>
        <fullName evidence="2">Alpha-conotoxin Lo1a</fullName>
    </recommendedName>
</protein>
<comment type="function">
    <text evidence="1">Alpha-conotoxins act on postsynaptic membranes, they bind to the nicotinic acetylcholine receptors (nAChR) and thus inhibit them. This peptide is active on neuronal nAChRs alpha-7/CHRNA7 (IC(50) of 3.24 uM), alpha-3-beta-4/CHRNA3-CHRNB4, alpha-4-beta-2/CHRNA4-CHRNB2, and alpha-4-beta-4/CHRNA4-CHRNB4. 10 uM of this peptide inhibits these receptors by 85%, 40%, 19%, and 13%, respectively.</text>
</comment>
<comment type="subcellular location">
    <subcellularLocation>
        <location evidence="1">Secreted</location>
    </subcellularLocation>
</comment>
<comment type="tissue specificity">
    <text evidence="4">Expressed by the venom duct.</text>
</comment>
<comment type="domain">
    <text evidence="3">The cysteine framework is I (CC-C-C).</text>
</comment>
<comment type="mass spectrometry" mass="1930.12" method="MALDI" evidence="1"/>
<comment type="miscellaneous">
    <text evidence="4">Negative results: does not show effect on the muscle nAChRs alpha-1-beta-1-epsilon-delta/CHRNA1-CHRNB1-CHRNE-CHRND (adult subtype) and alpha-1-beta-1-gamma-delta/CHRNA1-CHRNB1-CHRNG-CHRND (fetal subtype).</text>
</comment>
<comment type="similarity">
    <text evidence="3">Belongs to the conotoxin A superfamily.</text>
</comment>
<dbReference type="PDB" id="2MD6">
    <property type="method" value="NMR"/>
    <property type="chains" value="A=1-18"/>
</dbReference>
<dbReference type="PDBsum" id="2MD6"/>
<dbReference type="BMRB" id="X1WB75"/>
<dbReference type="SMR" id="X1WB75"/>
<dbReference type="EvolutionaryTrace" id="X1WB75"/>
<dbReference type="GO" id="GO:0005576">
    <property type="term" value="C:extracellular region"/>
    <property type="evidence" value="ECO:0007669"/>
    <property type="project" value="UniProtKB-SubCell"/>
</dbReference>
<dbReference type="GO" id="GO:0035792">
    <property type="term" value="C:host cell postsynaptic membrane"/>
    <property type="evidence" value="ECO:0007669"/>
    <property type="project" value="UniProtKB-KW"/>
</dbReference>
<dbReference type="GO" id="GO:0030550">
    <property type="term" value="F:acetylcholine receptor inhibitor activity"/>
    <property type="evidence" value="ECO:0007669"/>
    <property type="project" value="UniProtKB-KW"/>
</dbReference>
<dbReference type="GO" id="GO:0099106">
    <property type="term" value="F:ion channel regulator activity"/>
    <property type="evidence" value="ECO:0007669"/>
    <property type="project" value="UniProtKB-KW"/>
</dbReference>
<dbReference type="GO" id="GO:0090729">
    <property type="term" value="F:toxin activity"/>
    <property type="evidence" value="ECO:0007669"/>
    <property type="project" value="UniProtKB-KW"/>
</dbReference>
<dbReference type="InterPro" id="IPR009958">
    <property type="entry name" value="Conotoxin_a-typ"/>
</dbReference>
<dbReference type="InterPro" id="IPR018072">
    <property type="entry name" value="Conotoxin_a-typ_CS"/>
</dbReference>
<dbReference type="Pfam" id="PF07365">
    <property type="entry name" value="Toxin_8"/>
    <property type="match status" value="1"/>
</dbReference>
<dbReference type="PROSITE" id="PS60014">
    <property type="entry name" value="ALPHA_CONOTOXIN"/>
    <property type="match status" value="1"/>
</dbReference>
<feature type="peptide" id="PRO_0000430171" description="Alpha-conotoxin Lo1a" evidence="1">
    <location>
        <begin position="1"/>
        <end position="18"/>
    </location>
</feature>
<feature type="disulfide bond" evidence="1">
    <location>
        <begin position="3"/>
        <end position="9"/>
    </location>
</feature>
<feature type="disulfide bond" evidence="1">
    <location>
        <begin position="4"/>
        <end position="17"/>
    </location>
</feature>
<feature type="mutagenesis site" description="Is more potent at the alpha-7 nAChR (IC(50)=1.06 uM), and surprinsingly inhibits the adult muscle subtype alpha-1/beta-1/delta/epsilon (IC(50)=1.47 uM or 82% when 10 uM of the peptide are tested), but not the fetal subtype alpha-1/beta-1/delta/gamma." evidence="1">
    <original>D</original>
    <variation>RRR</variation>
    <location>
        <position position="18"/>
    </location>
</feature>
<feature type="mutagenesis site" description="Is more potent at the alpha-7 nAChR (IC(50)=0.80 nM), and surprinsingly inhibits the adult muscle subtype alpha-1/beta-1/delta/epsilon (IC(50)=4.40 uM or 80% when 10 uM of the peptide are tested), and the fetal muscle subtype alpha-1/beta-1/delta/gamma (38% when 10 uM of the peptide are tested)." evidence="1">
    <location>
        <position position="18"/>
    </location>
</feature>
<feature type="strand" evidence="5">
    <location>
        <begin position="3"/>
        <end position="6"/>
    </location>
</feature>
<feature type="helix" evidence="5">
    <location>
        <begin position="7"/>
        <end position="10"/>
    </location>
</feature>
<feature type="helix" evidence="5">
    <location>
        <begin position="14"/>
        <end position="16"/>
    </location>
</feature>
<proteinExistence type="evidence at protein level"/>